<sequence>MNFSAVILAAGKGTRMYSNKPKVLHTLAGKPMAKHVIDTCEGLGAQNIHLVYGHGGDQMKAELGEERVQWVLQAEQLGTGHAVNQAAPEFADDEKVLVLYGDVPLISAETVENLLDAQPTGGIALLTVVLDNPMGYGRIIRRNGPVIAIVEQKDATEEQKLIKEINTGVMVATGGDLKRWLAALKNENAQGEYYLTDIIAAAHDEGRAVEAVHPVSPIEVEGVNDRAQLARLERAYQAAQAQKLLEQGVMLRDPSRFDLRGTLQCGMDIEIDANVIIEGNVTLGDNVIIGAGCVLKDCEIDDNTVIRPYSVIEGATVGEECTVGPFTRLRPGAELCNDAHVGNFVEVKNVRLGEGSKANHLTYLGDAEIGKRVNVGAGVITCNYDGANKFKTIIGDDVFVGSDSQLIAPVTVANGATVGAGSTVTKDVNENELYISRAKERRIANWQRPTKK</sequence>
<organism>
    <name type="scientific">Aliivibrio fischeri (strain ATCC 700601 / ES114)</name>
    <name type="common">Vibrio fischeri</name>
    <dbReference type="NCBI Taxonomy" id="312309"/>
    <lineage>
        <taxon>Bacteria</taxon>
        <taxon>Pseudomonadati</taxon>
        <taxon>Pseudomonadota</taxon>
        <taxon>Gammaproteobacteria</taxon>
        <taxon>Vibrionales</taxon>
        <taxon>Vibrionaceae</taxon>
        <taxon>Aliivibrio</taxon>
    </lineage>
</organism>
<gene>
    <name evidence="1" type="primary">glmU</name>
    <name type="ordered locus">VF_2562</name>
</gene>
<proteinExistence type="inferred from homology"/>
<protein>
    <recommendedName>
        <fullName evidence="1">Bifunctional protein GlmU</fullName>
    </recommendedName>
    <domain>
        <recommendedName>
            <fullName evidence="1">UDP-N-acetylglucosamine pyrophosphorylase</fullName>
            <ecNumber evidence="1">2.7.7.23</ecNumber>
        </recommendedName>
        <alternativeName>
            <fullName evidence="1">N-acetylglucosamine-1-phosphate uridyltransferase</fullName>
        </alternativeName>
    </domain>
    <domain>
        <recommendedName>
            <fullName evidence="1">Glucosamine-1-phosphate N-acetyltransferase</fullName>
            <ecNumber evidence="1">2.3.1.157</ecNumber>
        </recommendedName>
    </domain>
</protein>
<name>GLMU_ALIF1</name>
<comment type="function">
    <text evidence="1">Catalyzes the last two sequential reactions in the de novo biosynthetic pathway for UDP-N-acetylglucosamine (UDP-GlcNAc). The C-terminal domain catalyzes the transfer of acetyl group from acetyl coenzyme A to glucosamine-1-phosphate (GlcN-1-P) to produce N-acetylglucosamine-1-phosphate (GlcNAc-1-P), which is converted into UDP-GlcNAc by the transfer of uridine 5-monophosphate (from uridine 5-triphosphate), a reaction catalyzed by the N-terminal domain.</text>
</comment>
<comment type="catalytic activity">
    <reaction evidence="1">
        <text>alpha-D-glucosamine 1-phosphate + acetyl-CoA = N-acetyl-alpha-D-glucosamine 1-phosphate + CoA + H(+)</text>
        <dbReference type="Rhea" id="RHEA:13725"/>
        <dbReference type="ChEBI" id="CHEBI:15378"/>
        <dbReference type="ChEBI" id="CHEBI:57287"/>
        <dbReference type="ChEBI" id="CHEBI:57288"/>
        <dbReference type="ChEBI" id="CHEBI:57776"/>
        <dbReference type="ChEBI" id="CHEBI:58516"/>
        <dbReference type="EC" id="2.3.1.157"/>
    </reaction>
</comment>
<comment type="catalytic activity">
    <reaction evidence="1">
        <text>N-acetyl-alpha-D-glucosamine 1-phosphate + UTP + H(+) = UDP-N-acetyl-alpha-D-glucosamine + diphosphate</text>
        <dbReference type="Rhea" id="RHEA:13509"/>
        <dbReference type="ChEBI" id="CHEBI:15378"/>
        <dbReference type="ChEBI" id="CHEBI:33019"/>
        <dbReference type="ChEBI" id="CHEBI:46398"/>
        <dbReference type="ChEBI" id="CHEBI:57705"/>
        <dbReference type="ChEBI" id="CHEBI:57776"/>
        <dbReference type="EC" id="2.7.7.23"/>
    </reaction>
</comment>
<comment type="cofactor">
    <cofactor evidence="1">
        <name>Mg(2+)</name>
        <dbReference type="ChEBI" id="CHEBI:18420"/>
    </cofactor>
    <text evidence="1">Binds 1 Mg(2+) ion per subunit.</text>
</comment>
<comment type="pathway">
    <text evidence="1">Nucleotide-sugar biosynthesis; UDP-N-acetyl-alpha-D-glucosamine biosynthesis; N-acetyl-alpha-D-glucosamine 1-phosphate from alpha-D-glucosamine 6-phosphate (route II): step 2/2.</text>
</comment>
<comment type="pathway">
    <text evidence="1">Nucleotide-sugar biosynthesis; UDP-N-acetyl-alpha-D-glucosamine biosynthesis; UDP-N-acetyl-alpha-D-glucosamine from N-acetyl-alpha-D-glucosamine 1-phosphate: step 1/1.</text>
</comment>
<comment type="pathway">
    <text evidence="1">Bacterial outer membrane biogenesis; LPS lipid A biosynthesis.</text>
</comment>
<comment type="subunit">
    <text evidence="1">Homotrimer.</text>
</comment>
<comment type="subcellular location">
    <subcellularLocation>
        <location evidence="1">Cytoplasm</location>
    </subcellularLocation>
</comment>
<comment type="similarity">
    <text evidence="1">In the N-terminal section; belongs to the N-acetylglucosamine-1-phosphate uridyltransferase family.</text>
</comment>
<comment type="similarity">
    <text evidence="1">In the C-terminal section; belongs to the transferase hexapeptide repeat family.</text>
</comment>
<keyword id="KW-0012">Acyltransferase</keyword>
<keyword id="KW-0133">Cell shape</keyword>
<keyword id="KW-0961">Cell wall biogenesis/degradation</keyword>
<keyword id="KW-0963">Cytoplasm</keyword>
<keyword id="KW-0460">Magnesium</keyword>
<keyword id="KW-0479">Metal-binding</keyword>
<keyword id="KW-0511">Multifunctional enzyme</keyword>
<keyword id="KW-0548">Nucleotidyltransferase</keyword>
<keyword id="KW-0573">Peptidoglycan synthesis</keyword>
<keyword id="KW-1185">Reference proteome</keyword>
<keyword id="KW-0677">Repeat</keyword>
<keyword id="KW-0808">Transferase</keyword>
<reference key="1">
    <citation type="journal article" date="2005" name="Proc. Natl. Acad. Sci. U.S.A.">
        <title>Complete genome sequence of Vibrio fischeri: a symbiotic bacterium with pathogenic congeners.</title>
        <authorList>
            <person name="Ruby E.G."/>
            <person name="Urbanowski M."/>
            <person name="Campbell J."/>
            <person name="Dunn A."/>
            <person name="Faini M."/>
            <person name="Gunsalus R."/>
            <person name="Lostroh P."/>
            <person name="Lupp C."/>
            <person name="McCann J."/>
            <person name="Millikan D."/>
            <person name="Schaefer A."/>
            <person name="Stabb E."/>
            <person name="Stevens A."/>
            <person name="Visick K."/>
            <person name="Whistler C."/>
            <person name="Greenberg E.P."/>
        </authorList>
    </citation>
    <scope>NUCLEOTIDE SEQUENCE [LARGE SCALE GENOMIC DNA]</scope>
    <source>
        <strain>ATCC 700601 / ES114</strain>
    </source>
</reference>
<evidence type="ECO:0000255" key="1">
    <source>
        <dbReference type="HAMAP-Rule" id="MF_01631"/>
    </source>
</evidence>
<dbReference type="EC" id="2.7.7.23" evidence="1"/>
<dbReference type="EC" id="2.3.1.157" evidence="1"/>
<dbReference type="EMBL" id="CP000020">
    <property type="protein sequence ID" value="AAW87057.1"/>
    <property type="molecule type" value="Genomic_DNA"/>
</dbReference>
<dbReference type="RefSeq" id="WP_005421582.1">
    <property type="nucleotide sequence ID" value="NC_006840.2"/>
</dbReference>
<dbReference type="RefSeq" id="YP_205945.1">
    <property type="nucleotide sequence ID" value="NC_006840.2"/>
</dbReference>
<dbReference type="SMR" id="Q5E1N9"/>
<dbReference type="STRING" id="312309.VF_2562"/>
<dbReference type="EnsemblBacteria" id="AAW87057">
    <property type="protein sequence ID" value="AAW87057"/>
    <property type="gene ID" value="VF_2562"/>
</dbReference>
<dbReference type="GeneID" id="54165312"/>
<dbReference type="KEGG" id="vfi:VF_2562"/>
<dbReference type="PATRIC" id="fig|312309.11.peg.2589"/>
<dbReference type="eggNOG" id="COG1207">
    <property type="taxonomic scope" value="Bacteria"/>
</dbReference>
<dbReference type="HOGENOM" id="CLU_029499_15_2_6"/>
<dbReference type="OrthoDB" id="9775031at2"/>
<dbReference type="UniPathway" id="UPA00113">
    <property type="reaction ID" value="UER00532"/>
</dbReference>
<dbReference type="UniPathway" id="UPA00113">
    <property type="reaction ID" value="UER00533"/>
</dbReference>
<dbReference type="UniPathway" id="UPA00973"/>
<dbReference type="Proteomes" id="UP000000537">
    <property type="component" value="Chromosome I"/>
</dbReference>
<dbReference type="GO" id="GO:0005737">
    <property type="term" value="C:cytoplasm"/>
    <property type="evidence" value="ECO:0007669"/>
    <property type="project" value="UniProtKB-SubCell"/>
</dbReference>
<dbReference type="GO" id="GO:0016020">
    <property type="term" value="C:membrane"/>
    <property type="evidence" value="ECO:0007669"/>
    <property type="project" value="GOC"/>
</dbReference>
<dbReference type="GO" id="GO:0019134">
    <property type="term" value="F:glucosamine-1-phosphate N-acetyltransferase activity"/>
    <property type="evidence" value="ECO:0007669"/>
    <property type="project" value="UniProtKB-UniRule"/>
</dbReference>
<dbReference type="GO" id="GO:0000287">
    <property type="term" value="F:magnesium ion binding"/>
    <property type="evidence" value="ECO:0007669"/>
    <property type="project" value="UniProtKB-UniRule"/>
</dbReference>
<dbReference type="GO" id="GO:0003977">
    <property type="term" value="F:UDP-N-acetylglucosamine diphosphorylase activity"/>
    <property type="evidence" value="ECO:0007669"/>
    <property type="project" value="UniProtKB-UniRule"/>
</dbReference>
<dbReference type="GO" id="GO:0000902">
    <property type="term" value="P:cell morphogenesis"/>
    <property type="evidence" value="ECO:0007669"/>
    <property type="project" value="UniProtKB-UniRule"/>
</dbReference>
<dbReference type="GO" id="GO:0071555">
    <property type="term" value="P:cell wall organization"/>
    <property type="evidence" value="ECO:0007669"/>
    <property type="project" value="UniProtKB-KW"/>
</dbReference>
<dbReference type="GO" id="GO:0009245">
    <property type="term" value="P:lipid A biosynthetic process"/>
    <property type="evidence" value="ECO:0007669"/>
    <property type="project" value="UniProtKB-UniRule"/>
</dbReference>
<dbReference type="GO" id="GO:0009252">
    <property type="term" value="P:peptidoglycan biosynthetic process"/>
    <property type="evidence" value="ECO:0007669"/>
    <property type="project" value="UniProtKB-UniRule"/>
</dbReference>
<dbReference type="GO" id="GO:0008360">
    <property type="term" value="P:regulation of cell shape"/>
    <property type="evidence" value="ECO:0007669"/>
    <property type="project" value="UniProtKB-KW"/>
</dbReference>
<dbReference type="GO" id="GO:0006048">
    <property type="term" value="P:UDP-N-acetylglucosamine biosynthetic process"/>
    <property type="evidence" value="ECO:0007669"/>
    <property type="project" value="UniProtKB-UniPathway"/>
</dbReference>
<dbReference type="CDD" id="cd02540">
    <property type="entry name" value="GT2_GlmU_N_bac"/>
    <property type="match status" value="1"/>
</dbReference>
<dbReference type="CDD" id="cd03353">
    <property type="entry name" value="LbH_GlmU_C"/>
    <property type="match status" value="1"/>
</dbReference>
<dbReference type="FunFam" id="3.90.550.10:FF:000006">
    <property type="entry name" value="Bifunctional protein GlmU"/>
    <property type="match status" value="1"/>
</dbReference>
<dbReference type="Gene3D" id="2.160.10.10">
    <property type="entry name" value="Hexapeptide repeat proteins"/>
    <property type="match status" value="1"/>
</dbReference>
<dbReference type="Gene3D" id="3.90.550.10">
    <property type="entry name" value="Spore Coat Polysaccharide Biosynthesis Protein SpsA, Chain A"/>
    <property type="match status" value="1"/>
</dbReference>
<dbReference type="HAMAP" id="MF_01631">
    <property type="entry name" value="GlmU"/>
    <property type="match status" value="1"/>
</dbReference>
<dbReference type="InterPro" id="IPR005882">
    <property type="entry name" value="Bifunctional_GlmU"/>
</dbReference>
<dbReference type="InterPro" id="IPR050065">
    <property type="entry name" value="GlmU-like"/>
</dbReference>
<dbReference type="InterPro" id="IPR038009">
    <property type="entry name" value="GlmU_C_LbH"/>
</dbReference>
<dbReference type="InterPro" id="IPR001451">
    <property type="entry name" value="Hexapep"/>
</dbReference>
<dbReference type="InterPro" id="IPR018357">
    <property type="entry name" value="Hexapep_transf_CS"/>
</dbReference>
<dbReference type="InterPro" id="IPR025877">
    <property type="entry name" value="MobA-like_NTP_Trfase"/>
</dbReference>
<dbReference type="InterPro" id="IPR029044">
    <property type="entry name" value="Nucleotide-diphossugar_trans"/>
</dbReference>
<dbReference type="InterPro" id="IPR011004">
    <property type="entry name" value="Trimer_LpxA-like_sf"/>
</dbReference>
<dbReference type="NCBIfam" id="TIGR01173">
    <property type="entry name" value="glmU"/>
    <property type="match status" value="1"/>
</dbReference>
<dbReference type="NCBIfam" id="NF006986">
    <property type="entry name" value="PRK09451.1"/>
    <property type="match status" value="1"/>
</dbReference>
<dbReference type="PANTHER" id="PTHR43584:SF3">
    <property type="entry name" value="BIFUNCTIONAL PROTEIN GLMU"/>
    <property type="match status" value="1"/>
</dbReference>
<dbReference type="PANTHER" id="PTHR43584">
    <property type="entry name" value="NUCLEOTIDYL TRANSFERASE"/>
    <property type="match status" value="1"/>
</dbReference>
<dbReference type="Pfam" id="PF00132">
    <property type="entry name" value="Hexapep"/>
    <property type="match status" value="2"/>
</dbReference>
<dbReference type="Pfam" id="PF12804">
    <property type="entry name" value="NTP_transf_3"/>
    <property type="match status" value="1"/>
</dbReference>
<dbReference type="SUPFAM" id="SSF53448">
    <property type="entry name" value="Nucleotide-diphospho-sugar transferases"/>
    <property type="match status" value="1"/>
</dbReference>
<dbReference type="SUPFAM" id="SSF51161">
    <property type="entry name" value="Trimeric LpxA-like enzymes"/>
    <property type="match status" value="1"/>
</dbReference>
<dbReference type="PROSITE" id="PS00101">
    <property type="entry name" value="HEXAPEP_TRANSFERASES"/>
    <property type="match status" value="1"/>
</dbReference>
<accession>Q5E1N9</accession>
<feature type="chain" id="PRO_0000233873" description="Bifunctional protein GlmU">
    <location>
        <begin position="1"/>
        <end position="452"/>
    </location>
</feature>
<feature type="region of interest" description="Pyrophosphorylase" evidence="1">
    <location>
        <begin position="1"/>
        <end position="226"/>
    </location>
</feature>
<feature type="region of interest" description="Linker" evidence="1">
    <location>
        <begin position="227"/>
        <end position="247"/>
    </location>
</feature>
<feature type="region of interest" description="N-acetyltransferase" evidence="1">
    <location>
        <begin position="248"/>
        <end position="452"/>
    </location>
</feature>
<feature type="active site" description="Proton acceptor" evidence="1">
    <location>
        <position position="360"/>
    </location>
</feature>
<feature type="binding site" evidence="1">
    <location>
        <begin position="8"/>
        <end position="11"/>
    </location>
    <ligand>
        <name>UDP-N-acetyl-alpha-D-glucosamine</name>
        <dbReference type="ChEBI" id="CHEBI:57705"/>
    </ligand>
</feature>
<feature type="binding site" evidence="1">
    <location>
        <position position="22"/>
    </location>
    <ligand>
        <name>UDP-N-acetyl-alpha-D-glucosamine</name>
        <dbReference type="ChEBI" id="CHEBI:57705"/>
    </ligand>
</feature>
<feature type="binding site" evidence="1">
    <location>
        <position position="73"/>
    </location>
    <ligand>
        <name>UDP-N-acetyl-alpha-D-glucosamine</name>
        <dbReference type="ChEBI" id="CHEBI:57705"/>
    </ligand>
</feature>
<feature type="binding site" evidence="1">
    <location>
        <begin position="78"/>
        <end position="79"/>
    </location>
    <ligand>
        <name>UDP-N-acetyl-alpha-D-glucosamine</name>
        <dbReference type="ChEBI" id="CHEBI:57705"/>
    </ligand>
</feature>
<feature type="binding site" evidence="1">
    <location>
        <begin position="100"/>
        <end position="102"/>
    </location>
    <ligand>
        <name>UDP-N-acetyl-alpha-D-glucosamine</name>
        <dbReference type="ChEBI" id="CHEBI:57705"/>
    </ligand>
</feature>
<feature type="binding site" evidence="1">
    <location>
        <position position="102"/>
    </location>
    <ligand>
        <name>Mg(2+)</name>
        <dbReference type="ChEBI" id="CHEBI:18420"/>
    </ligand>
</feature>
<feature type="binding site" evidence="1">
    <location>
        <position position="137"/>
    </location>
    <ligand>
        <name>UDP-N-acetyl-alpha-D-glucosamine</name>
        <dbReference type="ChEBI" id="CHEBI:57705"/>
    </ligand>
</feature>
<feature type="binding site" evidence="1">
    <location>
        <position position="151"/>
    </location>
    <ligand>
        <name>UDP-N-acetyl-alpha-D-glucosamine</name>
        <dbReference type="ChEBI" id="CHEBI:57705"/>
    </ligand>
</feature>
<feature type="binding site" evidence="1">
    <location>
        <position position="166"/>
    </location>
    <ligand>
        <name>UDP-N-acetyl-alpha-D-glucosamine</name>
        <dbReference type="ChEBI" id="CHEBI:57705"/>
    </ligand>
</feature>
<feature type="binding site" evidence="1">
    <location>
        <position position="224"/>
    </location>
    <ligand>
        <name>Mg(2+)</name>
        <dbReference type="ChEBI" id="CHEBI:18420"/>
    </ligand>
</feature>
<feature type="binding site" evidence="1">
    <location>
        <position position="224"/>
    </location>
    <ligand>
        <name>UDP-N-acetyl-alpha-D-glucosamine</name>
        <dbReference type="ChEBI" id="CHEBI:57705"/>
    </ligand>
</feature>
<feature type="binding site" evidence="1">
    <location>
        <position position="330"/>
    </location>
    <ligand>
        <name>UDP-N-acetyl-alpha-D-glucosamine</name>
        <dbReference type="ChEBI" id="CHEBI:57705"/>
    </ligand>
</feature>
<feature type="binding site" evidence="1">
    <location>
        <position position="348"/>
    </location>
    <ligand>
        <name>UDP-N-acetyl-alpha-D-glucosamine</name>
        <dbReference type="ChEBI" id="CHEBI:57705"/>
    </ligand>
</feature>
<feature type="binding site" evidence="1">
    <location>
        <position position="363"/>
    </location>
    <ligand>
        <name>UDP-N-acetyl-alpha-D-glucosamine</name>
        <dbReference type="ChEBI" id="CHEBI:57705"/>
    </ligand>
</feature>
<feature type="binding site" evidence="1">
    <location>
        <position position="374"/>
    </location>
    <ligand>
        <name>UDP-N-acetyl-alpha-D-glucosamine</name>
        <dbReference type="ChEBI" id="CHEBI:57705"/>
    </ligand>
</feature>
<feature type="binding site" evidence="1">
    <location>
        <position position="377"/>
    </location>
    <ligand>
        <name>acetyl-CoA</name>
        <dbReference type="ChEBI" id="CHEBI:57288"/>
    </ligand>
</feature>
<feature type="binding site" evidence="1">
    <location>
        <begin position="383"/>
        <end position="384"/>
    </location>
    <ligand>
        <name>acetyl-CoA</name>
        <dbReference type="ChEBI" id="CHEBI:57288"/>
    </ligand>
</feature>
<feature type="binding site" evidence="1">
    <location>
        <position position="402"/>
    </location>
    <ligand>
        <name>acetyl-CoA</name>
        <dbReference type="ChEBI" id="CHEBI:57288"/>
    </ligand>
</feature>
<feature type="binding site" evidence="1">
    <location>
        <position position="420"/>
    </location>
    <ligand>
        <name>acetyl-CoA</name>
        <dbReference type="ChEBI" id="CHEBI:57288"/>
    </ligand>
</feature>
<feature type="binding site" evidence="1">
    <location>
        <position position="437"/>
    </location>
    <ligand>
        <name>acetyl-CoA</name>
        <dbReference type="ChEBI" id="CHEBI:57288"/>
    </ligand>
</feature>